<evidence type="ECO:0000250" key="1">
    <source>
        <dbReference type="UniProtKB" id="Q6Q547"/>
    </source>
</evidence>
<evidence type="ECO:0000305" key="2"/>
<reference key="1">
    <citation type="journal article" date="2004" name="Science">
        <title>The Ashbya gossypii genome as a tool for mapping the ancient Saccharomyces cerevisiae genome.</title>
        <authorList>
            <person name="Dietrich F.S."/>
            <person name="Voegeli S."/>
            <person name="Brachat S."/>
            <person name="Lerch A."/>
            <person name="Gates K."/>
            <person name="Steiner S."/>
            <person name="Mohr C."/>
            <person name="Poehlmann R."/>
            <person name="Luedi P."/>
            <person name="Choi S."/>
            <person name="Wing R.A."/>
            <person name="Flavier A."/>
            <person name="Gaffney T.D."/>
            <person name="Philippsen P."/>
        </authorList>
    </citation>
    <scope>NUCLEOTIDE SEQUENCE [LARGE SCALE GENOMIC DNA]</scope>
    <source>
        <strain>ATCC 10895 / CBS 109.51 / FGSC 9923 / NRRL Y-1056</strain>
    </source>
</reference>
<reference key="2">
    <citation type="journal article" date="2013" name="G3 (Bethesda)">
        <title>Genomes of Ashbya fungi isolated from insects reveal four mating-type loci, numerous translocations, lack of transposons, and distinct gene duplications.</title>
        <authorList>
            <person name="Dietrich F.S."/>
            <person name="Voegeli S."/>
            <person name="Kuo S."/>
            <person name="Philippsen P."/>
        </authorList>
    </citation>
    <scope>GENOME REANNOTATION</scope>
    <source>
        <strain>ATCC 10895 / CBS 109.51 / FGSC 9923 / NRRL Y-1056</strain>
    </source>
</reference>
<name>NOP10_EREGS</name>
<feature type="chain" id="PRO_0000149008" description="H/ACA ribonucleoprotein complex subunit NOP10">
    <location>
        <begin position="1"/>
        <end position="57"/>
    </location>
</feature>
<organism>
    <name type="scientific">Eremothecium gossypii (strain ATCC 10895 / CBS 109.51 / FGSC 9923 / NRRL Y-1056)</name>
    <name type="common">Yeast</name>
    <name type="synonym">Ashbya gossypii</name>
    <dbReference type="NCBI Taxonomy" id="284811"/>
    <lineage>
        <taxon>Eukaryota</taxon>
        <taxon>Fungi</taxon>
        <taxon>Dikarya</taxon>
        <taxon>Ascomycota</taxon>
        <taxon>Saccharomycotina</taxon>
        <taxon>Saccharomycetes</taxon>
        <taxon>Saccharomycetales</taxon>
        <taxon>Saccharomycetaceae</taxon>
        <taxon>Eremothecium</taxon>
    </lineage>
</organism>
<sequence>MHLMYTLGPDGKRVYTLEKVTPSGEITKSAHPARFSPDDKYSRQRVTLKRRFDMLPR</sequence>
<comment type="function">
    <text evidence="1">Non-catalytic component of the H/ACA small nucleolar ribonucleoprotein (H/ACA snoRNP), which catalyzes pseudouridylation of rRNA and is required for ribosome biogenesis. This involves the isomerization of uridine such that the ribose is subsequently attached to C5, instead of the normal N1. Pseudouridine ('psi') residues may serve to stabilize the conformation of rRNAs. The H/ACA snoRNP complex also mediates pseudouridylation of other types of RNAs. The H/ACA snoRNP complex mediates pseudouridylation at position 93 in U2 snRNA.</text>
</comment>
<comment type="subunit">
    <text evidence="1">Component of the small nucleolar ribonucleoprotein particles containing H/ACA-type snoRNAs (H/ACA snoRNPs).</text>
</comment>
<comment type="subcellular location">
    <subcellularLocation>
        <location evidence="1">Nucleus</location>
        <location evidence="1">Nucleolus</location>
    </subcellularLocation>
</comment>
<comment type="similarity">
    <text evidence="2">Belongs to the NOP10 family.</text>
</comment>
<comment type="sequence caution" evidence="2">
    <conflict type="erroneous initiation">
        <sequence resource="EMBL-CDS" id="AAS54844"/>
    </conflict>
</comment>
<proteinExistence type="inferred from homology"/>
<gene>
    <name type="primary">NOP10</name>
    <name type="ordered locus">AGR354W</name>
</gene>
<accession>Q74Z52</accession>
<protein>
    <recommendedName>
        <fullName>H/ACA ribonucleoprotein complex subunit NOP10</fullName>
    </recommendedName>
    <alternativeName>
        <fullName>Nucleolar protein 10</fullName>
    </alternativeName>
    <alternativeName>
        <fullName>Nucleolar protein family A member 3</fullName>
    </alternativeName>
    <alternativeName>
        <fullName>snoRNP protein NOP10</fullName>
    </alternativeName>
</protein>
<dbReference type="EMBL" id="AE016820">
    <property type="protein sequence ID" value="AAS54844.1"/>
    <property type="status" value="ALT_INIT"/>
    <property type="molecule type" value="Genomic_DNA"/>
</dbReference>
<dbReference type="RefSeq" id="NP_987020.1">
    <property type="nucleotide sequence ID" value="NM_212082.1"/>
</dbReference>
<dbReference type="SMR" id="Q74Z52"/>
<dbReference type="FunCoup" id="Q74Z52">
    <property type="interactions" value="1353"/>
</dbReference>
<dbReference type="STRING" id="284811.Q74Z52"/>
<dbReference type="GeneID" id="4623323"/>
<dbReference type="KEGG" id="ago:AGOS_AGR354W"/>
<dbReference type="eggNOG" id="KOG3503">
    <property type="taxonomic scope" value="Eukaryota"/>
</dbReference>
<dbReference type="InParanoid" id="Q74Z52"/>
<dbReference type="OrthoDB" id="13807at2759"/>
<dbReference type="Proteomes" id="UP000000591">
    <property type="component" value="Chromosome VII"/>
</dbReference>
<dbReference type="GO" id="GO:0031429">
    <property type="term" value="C:box H/ACA snoRNP complex"/>
    <property type="evidence" value="ECO:0000318"/>
    <property type="project" value="GO_Central"/>
</dbReference>
<dbReference type="GO" id="GO:0030515">
    <property type="term" value="F:snoRNA binding"/>
    <property type="evidence" value="ECO:0007669"/>
    <property type="project" value="InterPro"/>
</dbReference>
<dbReference type="GO" id="GO:0070034">
    <property type="term" value="F:telomerase RNA binding"/>
    <property type="evidence" value="ECO:0000318"/>
    <property type="project" value="GO_Central"/>
</dbReference>
<dbReference type="GO" id="GO:0031118">
    <property type="term" value="P:rRNA pseudouridine synthesis"/>
    <property type="evidence" value="ECO:0000318"/>
    <property type="project" value="GO_Central"/>
</dbReference>
<dbReference type="GO" id="GO:0031120">
    <property type="term" value="P:snRNA pseudouridine synthesis"/>
    <property type="evidence" value="ECO:0000318"/>
    <property type="project" value="GO_Central"/>
</dbReference>
<dbReference type="FunFam" id="4.10.80.300:FF:000001">
    <property type="entry name" value="H/ACA ribonucleoprotein complex subunit 3"/>
    <property type="match status" value="1"/>
</dbReference>
<dbReference type="Gene3D" id="4.10.80.300">
    <property type="match status" value="1"/>
</dbReference>
<dbReference type="InterPro" id="IPR007264">
    <property type="entry name" value="H/ACA_rnp_Nop10"/>
</dbReference>
<dbReference type="InterPro" id="IPR036756">
    <property type="entry name" value="H/ACA_rnp_Nop10_sf"/>
</dbReference>
<dbReference type="PANTHER" id="PTHR13305:SF0">
    <property type="entry name" value="H_ACA RIBONUCLEOPROTEIN COMPLEX SUBUNIT 3"/>
    <property type="match status" value="1"/>
</dbReference>
<dbReference type="PANTHER" id="PTHR13305">
    <property type="entry name" value="RIBOSOME BIOGENESIS PROTEIN NOP10"/>
    <property type="match status" value="1"/>
</dbReference>
<dbReference type="Pfam" id="PF04135">
    <property type="entry name" value="Nop10p"/>
    <property type="match status" value="1"/>
</dbReference>
<dbReference type="SUPFAM" id="SSF144210">
    <property type="entry name" value="Nop10-like SnoRNP"/>
    <property type="match status" value="1"/>
</dbReference>
<keyword id="KW-0539">Nucleus</keyword>
<keyword id="KW-1185">Reference proteome</keyword>
<keyword id="KW-0687">Ribonucleoprotein</keyword>
<keyword id="KW-0690">Ribosome biogenesis</keyword>
<keyword id="KW-0698">rRNA processing</keyword>